<sequence length="297" mass="33448">MSNRALCREASHAGSWYTASGSQLSAQLDGWLSQAQTSKRPARAIIAPHAGYTYCGSCAAHAYKQVDPSVTRRVFILGPSHHVALSRCALSTVDIYRTPLYDLHIDQKVYGDLWKTGMFERMSLQTDEDEHSIEMHLPYTAKTMESHKDDLTIVPVLVGALSESKEQEFGKLFSKYLADPTNLFVISSDFCHWGQRFRYTYYDESQGEIYRSIENLDKMGMGIIEQLDPVQFSNYLKKYHNTICGRHPIGVLLNAATELQKNGVNMSFSFLNYAQSSQCRSWQDSSVSYAAGALVVH</sequence>
<keyword id="KW-1185">Reference proteome</keyword>
<protein>
    <recommendedName>
        <fullName>Protein MEMO1</fullName>
    </recommendedName>
    <alternativeName>
        <fullName>Mediator of ErbB2-driven cell motility 1</fullName>
        <shortName>Memo-1</shortName>
    </alternativeName>
</protein>
<evidence type="ECO:0000250" key="1"/>
<evidence type="ECO:0000305" key="2"/>
<organism>
    <name type="scientific">Xenopus tropicalis</name>
    <name type="common">Western clawed frog</name>
    <name type="synonym">Silurana tropicalis</name>
    <dbReference type="NCBI Taxonomy" id="8364"/>
    <lineage>
        <taxon>Eukaryota</taxon>
        <taxon>Metazoa</taxon>
        <taxon>Chordata</taxon>
        <taxon>Craniata</taxon>
        <taxon>Vertebrata</taxon>
        <taxon>Euteleostomi</taxon>
        <taxon>Amphibia</taxon>
        <taxon>Batrachia</taxon>
        <taxon>Anura</taxon>
        <taxon>Pipoidea</taxon>
        <taxon>Pipidae</taxon>
        <taxon>Xenopodinae</taxon>
        <taxon>Xenopus</taxon>
        <taxon>Silurana</taxon>
    </lineage>
</organism>
<proteinExistence type="evidence at transcript level"/>
<feature type="chain" id="PRO_0000260513" description="Protein MEMO1">
    <location>
        <begin position="1"/>
        <end position="297"/>
    </location>
</feature>
<name>MEMO1_XENTR</name>
<gene>
    <name type="primary">memo1</name>
    <name type="ORF">TGas016p14.1</name>
</gene>
<reference key="1">
    <citation type="submission" date="2006-10" db="EMBL/GenBank/DDBJ databases">
        <authorList>
            <consortium name="Sanger Xenopus tropicalis EST/cDNA project"/>
        </authorList>
    </citation>
    <scope>NUCLEOTIDE SEQUENCE [LARGE SCALE MRNA]</scope>
    <source>
        <tissue>Gastrula</tissue>
    </source>
</reference>
<reference key="2">
    <citation type="submission" date="2004-06" db="EMBL/GenBank/DDBJ databases">
        <authorList>
            <consortium name="NIH - Xenopus Gene Collection (XGC) project"/>
        </authorList>
    </citation>
    <scope>NUCLEOTIDE SEQUENCE [LARGE SCALE MRNA]</scope>
    <source>
        <tissue>Embryo</tissue>
    </source>
</reference>
<accession>Q6DJ03</accession>
<comment type="function">
    <text evidence="1">May control cell migration by relaying extracellular chemotactic signals to the microtubule cytoskeleton. Mediator of ERBB2 signaling (By similarity).</text>
</comment>
<comment type="subunit">
    <text evidence="1">Interacts with ERBB2.</text>
</comment>
<comment type="similarity">
    <text evidence="2">Belongs to the MEMO1 family.</text>
</comment>
<dbReference type="EMBL" id="CR762358">
    <property type="protein sequence ID" value="CAJ83509.1"/>
    <property type="molecule type" value="mRNA"/>
</dbReference>
<dbReference type="EMBL" id="BC075382">
    <property type="protein sequence ID" value="AAH75382.1"/>
    <property type="molecule type" value="mRNA"/>
</dbReference>
<dbReference type="RefSeq" id="NP_001004925.1">
    <property type="nucleotide sequence ID" value="NM_001004925.1"/>
</dbReference>
<dbReference type="SMR" id="Q6DJ03"/>
<dbReference type="FunCoup" id="Q6DJ03">
    <property type="interactions" value="2772"/>
</dbReference>
<dbReference type="STRING" id="8364.ENSXETP00000003620"/>
<dbReference type="PaxDb" id="8364-ENSXETP00000063262"/>
<dbReference type="GeneID" id="448307"/>
<dbReference type="KEGG" id="xtr:448307"/>
<dbReference type="AGR" id="Xenbase:XB-GENE-5777366"/>
<dbReference type="CTD" id="51072"/>
<dbReference type="Xenbase" id="XB-GENE-5777366">
    <property type="gene designation" value="memo1"/>
</dbReference>
<dbReference type="eggNOG" id="KOG3086">
    <property type="taxonomic scope" value="Eukaryota"/>
</dbReference>
<dbReference type="HOGENOM" id="CLU_038085_0_1_1"/>
<dbReference type="InParanoid" id="Q6DJ03"/>
<dbReference type="OMA" id="EQEAQYG"/>
<dbReference type="OrthoDB" id="417112at2759"/>
<dbReference type="Proteomes" id="UP000008143">
    <property type="component" value="Chromosome 5"/>
</dbReference>
<dbReference type="Bgee" id="ENSXETG00000008547">
    <property type="expression patterns" value="Expressed in testis and 15 other cell types or tissues"/>
</dbReference>
<dbReference type="CDD" id="cd07361">
    <property type="entry name" value="MEMO_like"/>
    <property type="match status" value="1"/>
</dbReference>
<dbReference type="FunFam" id="3.40.830.10:FF:000002">
    <property type="entry name" value="MEMO1 isoform 1"/>
    <property type="match status" value="1"/>
</dbReference>
<dbReference type="Gene3D" id="3.40.830.10">
    <property type="entry name" value="LigB-like"/>
    <property type="match status" value="1"/>
</dbReference>
<dbReference type="HAMAP" id="MF_00055">
    <property type="entry name" value="MEMO1"/>
    <property type="match status" value="1"/>
</dbReference>
<dbReference type="InterPro" id="IPR002737">
    <property type="entry name" value="MEMO1_fam"/>
</dbReference>
<dbReference type="NCBIfam" id="TIGR04336">
    <property type="entry name" value="AmmeMemoSam_B"/>
    <property type="match status" value="1"/>
</dbReference>
<dbReference type="PANTHER" id="PTHR11060">
    <property type="entry name" value="PROTEIN MEMO1"/>
    <property type="match status" value="1"/>
</dbReference>
<dbReference type="PANTHER" id="PTHR11060:SF0">
    <property type="entry name" value="PROTEIN MEMO1"/>
    <property type="match status" value="1"/>
</dbReference>
<dbReference type="Pfam" id="PF01875">
    <property type="entry name" value="Memo"/>
    <property type="match status" value="1"/>
</dbReference>